<accession>B8D6X3</accession>
<gene>
    <name evidence="1" type="primary">cca</name>
    <name type="ordered locus">BUAPTUC7_061</name>
</gene>
<protein>
    <recommendedName>
        <fullName evidence="1">CCA-adding enzyme</fullName>
        <ecNumber evidence="1">2.7.7.72</ecNumber>
    </recommendedName>
    <alternativeName>
        <fullName evidence="1">CCA tRNA nucleotidyltransferase</fullName>
    </alternativeName>
    <alternativeName>
        <fullName evidence="1">tRNA CCA-pyrophosphorylase</fullName>
    </alternativeName>
    <alternativeName>
        <fullName evidence="1">tRNA adenylyl-/cytidylyl- transferase</fullName>
    </alternativeName>
    <alternativeName>
        <fullName evidence="1">tRNA nucleotidyltransferase</fullName>
    </alternativeName>
    <alternativeName>
        <fullName evidence="1">tRNA-NT</fullName>
    </alternativeName>
</protein>
<keyword id="KW-0067">ATP-binding</keyword>
<keyword id="KW-0460">Magnesium</keyword>
<keyword id="KW-0479">Metal-binding</keyword>
<keyword id="KW-0547">Nucleotide-binding</keyword>
<keyword id="KW-0548">Nucleotidyltransferase</keyword>
<keyword id="KW-0692">RNA repair</keyword>
<keyword id="KW-0694">RNA-binding</keyword>
<keyword id="KW-0808">Transferase</keyword>
<keyword id="KW-0819">tRNA processing</keyword>
<proteinExistence type="inferred from homology"/>
<comment type="function">
    <text evidence="1">Catalyzes the addition and repair of the essential 3'-terminal CCA sequence in tRNAs without using a nucleic acid template. Adds these three nucleotides in the order of C, C, and A to the tRNA nucleotide-73, using CTP and ATP as substrates and producing inorganic pyrophosphate. tRNA 3'-terminal CCA addition is required both for tRNA processing and repair. Also involved in tRNA surveillance by mediating tandem CCA addition to generate a CCACCA at the 3' terminus of unstable tRNAs. While stable tRNAs receive only 3'-terminal CCA, unstable tRNAs are marked with CCACCA and rapidly degraded.</text>
</comment>
<comment type="catalytic activity">
    <reaction evidence="1">
        <text>a tRNA precursor + 2 CTP + ATP = a tRNA with a 3' CCA end + 3 diphosphate</text>
        <dbReference type="Rhea" id="RHEA:14433"/>
        <dbReference type="Rhea" id="RHEA-COMP:10465"/>
        <dbReference type="Rhea" id="RHEA-COMP:10468"/>
        <dbReference type="ChEBI" id="CHEBI:30616"/>
        <dbReference type="ChEBI" id="CHEBI:33019"/>
        <dbReference type="ChEBI" id="CHEBI:37563"/>
        <dbReference type="ChEBI" id="CHEBI:74896"/>
        <dbReference type="ChEBI" id="CHEBI:83071"/>
        <dbReference type="EC" id="2.7.7.72"/>
    </reaction>
</comment>
<comment type="catalytic activity">
    <reaction evidence="1">
        <text>a tRNA with a 3' CCA end + 2 CTP + ATP = a tRNA with a 3' CCACCA end + 3 diphosphate</text>
        <dbReference type="Rhea" id="RHEA:76235"/>
        <dbReference type="Rhea" id="RHEA-COMP:10468"/>
        <dbReference type="Rhea" id="RHEA-COMP:18655"/>
        <dbReference type="ChEBI" id="CHEBI:30616"/>
        <dbReference type="ChEBI" id="CHEBI:33019"/>
        <dbReference type="ChEBI" id="CHEBI:37563"/>
        <dbReference type="ChEBI" id="CHEBI:83071"/>
        <dbReference type="ChEBI" id="CHEBI:195187"/>
    </reaction>
    <physiologicalReaction direction="left-to-right" evidence="1">
        <dbReference type="Rhea" id="RHEA:76236"/>
    </physiologicalReaction>
</comment>
<comment type="cofactor">
    <cofactor evidence="1">
        <name>Mg(2+)</name>
        <dbReference type="ChEBI" id="CHEBI:18420"/>
    </cofactor>
</comment>
<comment type="miscellaneous">
    <text evidence="1">A single active site specifically recognizes both ATP and CTP and is responsible for their addition.</text>
</comment>
<comment type="similarity">
    <text evidence="1">Belongs to the tRNA nucleotidyltransferase/poly(A) polymerase family. Bacterial CCA-adding enzyme type 2 subfamily.</text>
</comment>
<evidence type="ECO:0000255" key="1">
    <source>
        <dbReference type="HAMAP-Rule" id="MF_01262"/>
    </source>
</evidence>
<feature type="chain" id="PRO_1000165128" description="CCA-adding enzyme">
    <location>
        <begin position="1"/>
        <end position="414"/>
    </location>
</feature>
<feature type="binding site" evidence="1">
    <location>
        <position position="8"/>
    </location>
    <ligand>
        <name>ATP</name>
        <dbReference type="ChEBI" id="CHEBI:30616"/>
    </ligand>
</feature>
<feature type="binding site" evidence="1">
    <location>
        <position position="8"/>
    </location>
    <ligand>
        <name>CTP</name>
        <dbReference type="ChEBI" id="CHEBI:37563"/>
    </ligand>
</feature>
<feature type="binding site" evidence="1">
    <location>
        <position position="11"/>
    </location>
    <ligand>
        <name>ATP</name>
        <dbReference type="ChEBI" id="CHEBI:30616"/>
    </ligand>
</feature>
<feature type="binding site" evidence="1">
    <location>
        <position position="11"/>
    </location>
    <ligand>
        <name>CTP</name>
        <dbReference type="ChEBI" id="CHEBI:37563"/>
    </ligand>
</feature>
<feature type="binding site" evidence="1">
    <location>
        <position position="21"/>
    </location>
    <ligand>
        <name>Mg(2+)</name>
        <dbReference type="ChEBI" id="CHEBI:18420"/>
    </ligand>
</feature>
<feature type="binding site" evidence="1">
    <location>
        <position position="23"/>
    </location>
    <ligand>
        <name>Mg(2+)</name>
        <dbReference type="ChEBI" id="CHEBI:18420"/>
    </ligand>
</feature>
<feature type="binding site" evidence="1">
    <location>
        <position position="91"/>
    </location>
    <ligand>
        <name>ATP</name>
        <dbReference type="ChEBI" id="CHEBI:30616"/>
    </ligand>
</feature>
<feature type="binding site" evidence="1">
    <location>
        <position position="91"/>
    </location>
    <ligand>
        <name>CTP</name>
        <dbReference type="ChEBI" id="CHEBI:37563"/>
    </ligand>
</feature>
<feature type="binding site" evidence="1">
    <location>
        <position position="137"/>
    </location>
    <ligand>
        <name>ATP</name>
        <dbReference type="ChEBI" id="CHEBI:30616"/>
    </ligand>
</feature>
<feature type="binding site" evidence="1">
    <location>
        <position position="137"/>
    </location>
    <ligand>
        <name>CTP</name>
        <dbReference type="ChEBI" id="CHEBI:37563"/>
    </ligand>
</feature>
<feature type="binding site" evidence="1">
    <location>
        <position position="140"/>
    </location>
    <ligand>
        <name>ATP</name>
        <dbReference type="ChEBI" id="CHEBI:30616"/>
    </ligand>
</feature>
<feature type="binding site" evidence="1">
    <location>
        <position position="140"/>
    </location>
    <ligand>
        <name>CTP</name>
        <dbReference type="ChEBI" id="CHEBI:37563"/>
    </ligand>
</feature>
<sequence>MKIYLVGGAVRDSLLNLPVKDKDWVVVGGTEKILLERNFQQVGKDFPVFLHPETHEEYALARKERKSGKGYTGFDTDCNSDVTLEEDLIRRDLTINAIAQDEYGNYIDPFQGKKDIECGLIRHVSESFIEDPLRVLRVARFAATLVHLGFKIAEETMLLMCIIVKKQELSYLTSNRIWNETEKALKTLNPHVYFQVLYECNALHFFFPEMYFLYEKKNFLNRSFFKKFCNKNIILMGLAEISLLNKDIDVRFSYLCQFLSVNQIDRNYSKIFFDSYAASIIHSLCKRFKIPSYIRDIAVLNTGFYFFLNTIHYQSSKNIINLFSKVDAWRKPDRVKKLAFLSNFNFLRNFKSEFFCIKSGCFLEKCFSVVKNVSIKLILKKGFKGYEIKQEITRLRIKKLEFWRIKNIKHRFYL</sequence>
<organism>
    <name type="scientific">Buchnera aphidicola subsp. Acyrthosiphon pisum (strain Tuc7)</name>
    <dbReference type="NCBI Taxonomy" id="561501"/>
    <lineage>
        <taxon>Bacteria</taxon>
        <taxon>Pseudomonadati</taxon>
        <taxon>Pseudomonadota</taxon>
        <taxon>Gammaproteobacteria</taxon>
        <taxon>Enterobacterales</taxon>
        <taxon>Erwiniaceae</taxon>
        <taxon>Buchnera</taxon>
    </lineage>
</organism>
<reference key="1">
    <citation type="journal article" date="2009" name="Science">
        <title>The dynamics and time scale of ongoing genomic erosion in symbiotic bacteria.</title>
        <authorList>
            <person name="Moran N.A."/>
            <person name="McLaughlin H.J."/>
            <person name="Sorek R."/>
        </authorList>
    </citation>
    <scope>NUCLEOTIDE SEQUENCE [LARGE SCALE GENOMIC DNA]</scope>
    <source>
        <strain>Tuc7</strain>
    </source>
</reference>
<name>CCA_BUCAT</name>
<dbReference type="EC" id="2.7.7.72" evidence="1"/>
<dbReference type="EMBL" id="CP001158">
    <property type="protein sequence ID" value="ACL29888.1"/>
    <property type="molecule type" value="Genomic_DNA"/>
</dbReference>
<dbReference type="RefSeq" id="WP_012619414.1">
    <property type="nucleotide sequence ID" value="NC_011834.1"/>
</dbReference>
<dbReference type="SMR" id="B8D6X3"/>
<dbReference type="KEGG" id="bau:BUAPTUC7_061"/>
<dbReference type="HOGENOM" id="CLU_015961_1_1_6"/>
<dbReference type="GO" id="GO:0005524">
    <property type="term" value="F:ATP binding"/>
    <property type="evidence" value="ECO:0007669"/>
    <property type="project" value="UniProtKB-UniRule"/>
</dbReference>
<dbReference type="GO" id="GO:0004810">
    <property type="term" value="F:CCA tRNA nucleotidyltransferase activity"/>
    <property type="evidence" value="ECO:0007669"/>
    <property type="project" value="UniProtKB-UniRule"/>
</dbReference>
<dbReference type="GO" id="GO:0000287">
    <property type="term" value="F:magnesium ion binding"/>
    <property type="evidence" value="ECO:0007669"/>
    <property type="project" value="UniProtKB-UniRule"/>
</dbReference>
<dbReference type="GO" id="GO:0000049">
    <property type="term" value="F:tRNA binding"/>
    <property type="evidence" value="ECO:0007669"/>
    <property type="project" value="UniProtKB-UniRule"/>
</dbReference>
<dbReference type="GO" id="GO:0042245">
    <property type="term" value="P:RNA repair"/>
    <property type="evidence" value="ECO:0007669"/>
    <property type="project" value="UniProtKB-KW"/>
</dbReference>
<dbReference type="GO" id="GO:0001680">
    <property type="term" value="P:tRNA 3'-terminal CCA addition"/>
    <property type="evidence" value="ECO:0007669"/>
    <property type="project" value="UniProtKB-UniRule"/>
</dbReference>
<dbReference type="Gene3D" id="3.30.460.10">
    <property type="entry name" value="Beta Polymerase, domain 2"/>
    <property type="match status" value="1"/>
</dbReference>
<dbReference type="Gene3D" id="1.10.3090.10">
    <property type="entry name" value="cca-adding enzyme, domain 2"/>
    <property type="match status" value="1"/>
</dbReference>
<dbReference type="HAMAP" id="MF_01262">
    <property type="entry name" value="CCA_bact_type2"/>
    <property type="match status" value="1"/>
</dbReference>
<dbReference type="InterPro" id="IPR012006">
    <property type="entry name" value="CCA_bact"/>
</dbReference>
<dbReference type="InterPro" id="IPR043519">
    <property type="entry name" value="NT_sf"/>
</dbReference>
<dbReference type="InterPro" id="IPR002646">
    <property type="entry name" value="PolA_pol_head_dom"/>
</dbReference>
<dbReference type="InterPro" id="IPR032828">
    <property type="entry name" value="PolyA_RNA-bd"/>
</dbReference>
<dbReference type="InterPro" id="IPR050124">
    <property type="entry name" value="tRNA_CCA-adding_enzyme"/>
</dbReference>
<dbReference type="NCBIfam" id="NF009813">
    <property type="entry name" value="PRK13298.1"/>
    <property type="match status" value="1"/>
</dbReference>
<dbReference type="PANTHER" id="PTHR47545">
    <property type="entry name" value="MULTIFUNCTIONAL CCA PROTEIN"/>
    <property type="match status" value="1"/>
</dbReference>
<dbReference type="PANTHER" id="PTHR47545:SF1">
    <property type="entry name" value="MULTIFUNCTIONAL CCA PROTEIN"/>
    <property type="match status" value="1"/>
</dbReference>
<dbReference type="Pfam" id="PF01743">
    <property type="entry name" value="PolyA_pol"/>
    <property type="match status" value="1"/>
</dbReference>
<dbReference type="Pfam" id="PF12627">
    <property type="entry name" value="PolyA_pol_RNAbd"/>
    <property type="match status" value="1"/>
</dbReference>
<dbReference type="PIRSF" id="PIRSF000813">
    <property type="entry name" value="CCA_bact"/>
    <property type="match status" value="1"/>
</dbReference>
<dbReference type="SUPFAM" id="SSF81301">
    <property type="entry name" value="Nucleotidyltransferase"/>
    <property type="match status" value="1"/>
</dbReference>
<dbReference type="SUPFAM" id="SSF81891">
    <property type="entry name" value="Poly A polymerase C-terminal region-like"/>
    <property type="match status" value="1"/>
</dbReference>